<sequence length="346" mass="37216">MNKKSVLVIHGGAGVISKSTISKEREEIFLNSLKNILLAGKIILKQGGTSLDVVQEAVRLLEEDPIYNAGKGSVFTELGTNEMDAAIMDGTNLKAGAVGGVSIIRNPIIAARAVMEHTNHCLLVGKGAEEFAKSKNLEIVEPSFFFTQNRYDQLLRAKDEKKLILDHDGENLLEKEKEKEKNNETSTTTTTISVGVDPIDPKYKMGTVGAVCLDSFGNLAAATSTGGMTNKMHGRVGDTPIIGAGVYANKNVAVSSTGTGEAFMRTVAAFDIAAMMEYGSLSLKDASNKVVMEKLITVGDGGVICVDKYGNVEMPFNTEGMYRGYVIIDNNCENDQNDIINVSIYK</sequence>
<organism>
    <name type="scientific">Dictyostelium discoideum</name>
    <name type="common">Social amoeba</name>
    <dbReference type="NCBI Taxonomy" id="44689"/>
    <lineage>
        <taxon>Eukaryota</taxon>
        <taxon>Amoebozoa</taxon>
        <taxon>Evosea</taxon>
        <taxon>Eumycetozoa</taxon>
        <taxon>Dictyostelia</taxon>
        <taxon>Dictyosteliales</taxon>
        <taxon>Dictyosteliaceae</taxon>
        <taxon>Dictyostelium</taxon>
    </lineage>
</organism>
<evidence type="ECO:0000250" key="1"/>
<evidence type="ECO:0000305" key="2"/>
<feature type="chain" id="PRO_0000329020" description="Putative isoaspartyl peptidase/L-asparaginase alpha chain">
    <location>
        <begin position="1"/>
        <end position="206"/>
    </location>
</feature>
<feature type="chain" id="PRO_0000329021" description="Putative isoaspartyl peptidase/L-asparaginase beta chain">
    <location>
        <begin position="207"/>
        <end position="346"/>
    </location>
</feature>
<feature type="active site" description="Nucleophile" evidence="1">
    <location>
        <position position="207"/>
    </location>
</feature>
<feature type="binding site" evidence="1">
    <location>
        <begin position="235"/>
        <end position="238"/>
    </location>
    <ligand>
        <name>substrate</name>
    </ligand>
</feature>
<feature type="binding site" evidence="1">
    <location>
        <begin position="257"/>
        <end position="260"/>
    </location>
    <ligand>
        <name>substrate</name>
    </ligand>
</feature>
<feature type="site" description="Cleavage; by autolysis" evidence="1">
    <location>
        <begin position="206"/>
        <end position="207"/>
    </location>
</feature>
<gene>
    <name type="ORF">DDB_G0279357</name>
</gene>
<reference key="1">
    <citation type="journal article" date="2005" name="Nature">
        <title>The genome of the social amoeba Dictyostelium discoideum.</title>
        <authorList>
            <person name="Eichinger L."/>
            <person name="Pachebat J.A."/>
            <person name="Gloeckner G."/>
            <person name="Rajandream M.A."/>
            <person name="Sucgang R."/>
            <person name="Berriman M."/>
            <person name="Song J."/>
            <person name="Olsen R."/>
            <person name="Szafranski K."/>
            <person name="Xu Q."/>
            <person name="Tunggal B."/>
            <person name="Kummerfeld S."/>
            <person name="Madera M."/>
            <person name="Konfortov B.A."/>
            <person name="Rivero F."/>
            <person name="Bankier A.T."/>
            <person name="Lehmann R."/>
            <person name="Hamlin N."/>
            <person name="Davies R."/>
            <person name="Gaudet P."/>
            <person name="Fey P."/>
            <person name="Pilcher K."/>
            <person name="Chen G."/>
            <person name="Saunders D."/>
            <person name="Sodergren E.J."/>
            <person name="Davis P."/>
            <person name="Kerhornou A."/>
            <person name="Nie X."/>
            <person name="Hall N."/>
            <person name="Anjard C."/>
            <person name="Hemphill L."/>
            <person name="Bason N."/>
            <person name="Farbrother P."/>
            <person name="Desany B."/>
            <person name="Just E."/>
            <person name="Morio T."/>
            <person name="Rost R."/>
            <person name="Churcher C.M."/>
            <person name="Cooper J."/>
            <person name="Haydock S."/>
            <person name="van Driessche N."/>
            <person name="Cronin A."/>
            <person name="Goodhead I."/>
            <person name="Muzny D.M."/>
            <person name="Mourier T."/>
            <person name="Pain A."/>
            <person name="Lu M."/>
            <person name="Harper D."/>
            <person name="Lindsay R."/>
            <person name="Hauser H."/>
            <person name="James K.D."/>
            <person name="Quiles M."/>
            <person name="Madan Babu M."/>
            <person name="Saito T."/>
            <person name="Buchrieser C."/>
            <person name="Wardroper A."/>
            <person name="Felder M."/>
            <person name="Thangavelu M."/>
            <person name="Johnson D."/>
            <person name="Knights A."/>
            <person name="Loulseged H."/>
            <person name="Mungall K.L."/>
            <person name="Oliver K."/>
            <person name="Price C."/>
            <person name="Quail M.A."/>
            <person name="Urushihara H."/>
            <person name="Hernandez J."/>
            <person name="Rabbinowitsch E."/>
            <person name="Steffen D."/>
            <person name="Sanders M."/>
            <person name="Ma J."/>
            <person name="Kohara Y."/>
            <person name="Sharp S."/>
            <person name="Simmonds M.N."/>
            <person name="Spiegler S."/>
            <person name="Tivey A."/>
            <person name="Sugano S."/>
            <person name="White B."/>
            <person name="Walker D."/>
            <person name="Woodward J.R."/>
            <person name="Winckler T."/>
            <person name="Tanaka Y."/>
            <person name="Shaulsky G."/>
            <person name="Schleicher M."/>
            <person name="Weinstock G.M."/>
            <person name="Rosenthal A."/>
            <person name="Cox E.C."/>
            <person name="Chisholm R.L."/>
            <person name="Gibbs R.A."/>
            <person name="Loomis W.F."/>
            <person name="Platzer M."/>
            <person name="Kay R.R."/>
            <person name="Williams J.G."/>
            <person name="Dear P.H."/>
            <person name="Noegel A.A."/>
            <person name="Barrell B.G."/>
            <person name="Kuspa A."/>
        </authorList>
    </citation>
    <scope>NUCLEOTIDE SEQUENCE [LARGE SCALE GENOMIC DNA]</scope>
    <source>
        <strain>AX4</strain>
    </source>
</reference>
<protein>
    <recommendedName>
        <fullName>Putative isoaspartyl peptidase/L-asparaginase</fullName>
        <ecNumber>3.4.19.5</ecNumber>
        <ecNumber>3.5.1.1</ecNumber>
    </recommendedName>
    <alternativeName>
        <fullName>Beta-aspartyl-peptidase</fullName>
    </alternativeName>
    <alternativeName>
        <fullName>Isoaspartyl dipeptidase</fullName>
    </alternativeName>
    <alternativeName>
        <fullName>L-asparagine amidohydrolase</fullName>
    </alternativeName>
    <component>
        <recommendedName>
            <fullName>Putative isoaspartyl peptidase/L-asparaginase alpha chain</fullName>
        </recommendedName>
    </component>
    <component>
        <recommendedName>
            <fullName>Putative isoaspartyl peptidase/L-asparaginase beta chain</fullName>
        </recommendedName>
    </component>
</protein>
<comment type="function">
    <text evidence="1">Has both L-asparaginase and beta-aspartyl peptidase activity. Does not have aspartylglucosaminidase activity and is inactive toward GlcNAc-L-Asn. Likewise, has no activity toward glutamine (By similarity).</text>
</comment>
<comment type="catalytic activity">
    <reaction>
        <text>Cleavage of a beta-linked Asp residue from the N-terminus of a polypeptide.</text>
        <dbReference type="EC" id="3.4.19.5"/>
    </reaction>
</comment>
<comment type="catalytic activity">
    <reaction>
        <text>L-asparagine + H2O = L-aspartate + NH4(+)</text>
        <dbReference type="Rhea" id="RHEA:21016"/>
        <dbReference type="ChEBI" id="CHEBI:15377"/>
        <dbReference type="ChEBI" id="CHEBI:28938"/>
        <dbReference type="ChEBI" id="CHEBI:29991"/>
        <dbReference type="ChEBI" id="CHEBI:58048"/>
        <dbReference type="EC" id="3.5.1.1"/>
    </reaction>
</comment>
<comment type="subunit">
    <text evidence="1">Heterodimer of an alpha and beta chain produced by autocleavage.</text>
</comment>
<comment type="PTM">
    <text evidence="1">Cleaved into an alpha and beta chain by autocatalysis; this activates the enzyme. The N-terminal residue of the beta subunit is responsible for the nucleophile hydrolase activity (By similarity).</text>
</comment>
<comment type="similarity">
    <text evidence="2">Belongs to the Ntn-hydrolases family.</text>
</comment>
<proteinExistence type="inferred from homology"/>
<keyword id="KW-0068">Autocatalytic cleavage</keyword>
<keyword id="KW-0378">Hydrolase</keyword>
<keyword id="KW-0645">Protease</keyword>
<keyword id="KW-1185">Reference proteome</keyword>
<name>ASGX_DICDI</name>
<dbReference type="EC" id="3.4.19.5"/>
<dbReference type="EC" id="3.5.1.1"/>
<dbReference type="EMBL" id="AAFI02000030">
    <property type="protein sequence ID" value="EAL67827.1"/>
    <property type="molecule type" value="Genomic_DNA"/>
</dbReference>
<dbReference type="RefSeq" id="XP_641813.1">
    <property type="nucleotide sequence ID" value="XM_636721.1"/>
</dbReference>
<dbReference type="SMR" id="Q54WW4"/>
<dbReference type="FunCoup" id="Q54WW4">
    <property type="interactions" value="6"/>
</dbReference>
<dbReference type="STRING" id="44689.Q54WW4"/>
<dbReference type="PaxDb" id="44689-DDB0230992"/>
<dbReference type="EnsemblProtists" id="EAL67827">
    <property type="protein sequence ID" value="EAL67827"/>
    <property type="gene ID" value="DDB_G0279357"/>
</dbReference>
<dbReference type="GeneID" id="8622009"/>
<dbReference type="KEGG" id="ddi:DDB_G0279357"/>
<dbReference type="dictyBase" id="DDB_G0279357"/>
<dbReference type="VEuPathDB" id="AmoebaDB:DDB_G0279357"/>
<dbReference type="eggNOG" id="KOG1592">
    <property type="taxonomic scope" value="Eukaryota"/>
</dbReference>
<dbReference type="HOGENOM" id="CLU_021603_1_0_1"/>
<dbReference type="InParanoid" id="Q54WW4"/>
<dbReference type="OMA" id="MGIIMVD"/>
<dbReference type="PhylomeDB" id="Q54WW4"/>
<dbReference type="PRO" id="PR:Q54WW4"/>
<dbReference type="Proteomes" id="UP000002195">
    <property type="component" value="Chromosome 3"/>
</dbReference>
<dbReference type="GO" id="GO:0004067">
    <property type="term" value="F:asparaginase activity"/>
    <property type="evidence" value="ECO:0000318"/>
    <property type="project" value="GO_Central"/>
</dbReference>
<dbReference type="GO" id="GO:0008798">
    <property type="term" value="F:beta-aspartyl-peptidase activity"/>
    <property type="evidence" value="ECO:0000318"/>
    <property type="project" value="GO_Central"/>
</dbReference>
<dbReference type="GO" id="GO:0006508">
    <property type="term" value="P:proteolysis"/>
    <property type="evidence" value="ECO:0007669"/>
    <property type="project" value="UniProtKB-KW"/>
</dbReference>
<dbReference type="CDD" id="cd04701">
    <property type="entry name" value="Asparaginase_2"/>
    <property type="match status" value="1"/>
</dbReference>
<dbReference type="FunFam" id="3.60.20.30:FF:000001">
    <property type="entry name" value="Isoaspartyl peptidase/L-asparaginase"/>
    <property type="match status" value="1"/>
</dbReference>
<dbReference type="Gene3D" id="3.60.20.30">
    <property type="entry name" value="(Glycosyl)asparaginase"/>
    <property type="match status" value="1"/>
</dbReference>
<dbReference type="InterPro" id="IPR029055">
    <property type="entry name" value="Ntn_hydrolases_N"/>
</dbReference>
<dbReference type="InterPro" id="IPR000246">
    <property type="entry name" value="Peptidase_T2"/>
</dbReference>
<dbReference type="PANTHER" id="PTHR10188">
    <property type="entry name" value="L-ASPARAGINASE"/>
    <property type="match status" value="1"/>
</dbReference>
<dbReference type="PANTHER" id="PTHR10188:SF6">
    <property type="entry name" value="N(4)-(BETA-N-ACETYLGLUCOSAMINYL)-L-ASPARAGINASE"/>
    <property type="match status" value="1"/>
</dbReference>
<dbReference type="Pfam" id="PF01112">
    <property type="entry name" value="Asparaginase_2"/>
    <property type="match status" value="1"/>
</dbReference>
<dbReference type="SUPFAM" id="SSF56235">
    <property type="entry name" value="N-terminal nucleophile aminohydrolases (Ntn hydrolases)"/>
    <property type="match status" value="1"/>
</dbReference>
<accession>Q54WW4</accession>